<organism>
    <name type="scientific">Saccharolobus islandicus (strain Y.G.57.14 / Yellowstone #1)</name>
    <name type="common">Sulfolobus islandicus</name>
    <dbReference type="NCBI Taxonomy" id="439386"/>
    <lineage>
        <taxon>Archaea</taxon>
        <taxon>Thermoproteota</taxon>
        <taxon>Thermoprotei</taxon>
        <taxon>Sulfolobales</taxon>
        <taxon>Sulfolobaceae</taxon>
        <taxon>Saccharolobus</taxon>
    </lineage>
</organism>
<comment type="function">
    <text evidence="1">Catalyzes the insertion of Co(2+) into sirohydrochlorin as part of the anaerobic pathway to cobalamin biosynthesis.</text>
</comment>
<comment type="catalytic activity">
    <reaction evidence="1">
        <text>Co-sirohydrochlorin + 2 H(+) = sirohydrochlorin + Co(2+)</text>
        <dbReference type="Rhea" id="RHEA:15893"/>
        <dbReference type="ChEBI" id="CHEBI:15378"/>
        <dbReference type="ChEBI" id="CHEBI:48828"/>
        <dbReference type="ChEBI" id="CHEBI:58351"/>
        <dbReference type="ChEBI" id="CHEBI:60049"/>
        <dbReference type="EC" id="4.99.1.3"/>
    </reaction>
</comment>
<comment type="pathway">
    <text evidence="1">Cofactor biosynthesis; adenosylcobalamin biosynthesis; cob(II)yrinate a,c-diamide from sirohydrochlorin (anaerobic route): step 1/10.</text>
</comment>
<comment type="subunit">
    <text evidence="1">Homotetramer; dimer of dimers.</text>
</comment>
<comment type="similarity">
    <text evidence="1">Belongs to the CbiX family. CbiXS subfamily.</text>
</comment>
<sequence length="128" mass="14432">MLGVLLVLHGSKIPEWKDVGIKYAEYLSRYFNLVEFGFLEFNKPTLSEALSNLLAKGANKIVVVPLLFATGTHFKRDIPRLLGIDGDEKKIQYMGKEIEIIIADPLGFDEKIGEVLVKGVNETYNKNY</sequence>
<protein>
    <recommendedName>
        <fullName evidence="1">Sirohydrochlorin cobaltochelatase</fullName>
        <ecNumber evidence="1">4.99.1.3</ecNumber>
    </recommendedName>
    <alternativeName>
        <fullName evidence="1">CbiXS</fullName>
    </alternativeName>
</protein>
<feature type="chain" id="PRO_1000212928" description="Sirohydrochlorin cobaltochelatase">
    <location>
        <begin position="1"/>
        <end position="128"/>
    </location>
</feature>
<feature type="active site" description="Proton acceptor" evidence="1">
    <location>
        <position position="9"/>
    </location>
</feature>
<feature type="binding site" evidence="1">
    <location>
        <position position="9"/>
    </location>
    <ligand>
        <name>Co(2+)</name>
        <dbReference type="ChEBI" id="CHEBI:48828"/>
    </ligand>
</feature>
<feature type="binding site" evidence="1">
    <location>
        <position position="43"/>
    </location>
    <ligand>
        <name>substrate</name>
    </ligand>
</feature>
<feature type="binding site" evidence="1">
    <location>
        <begin position="68"/>
        <end position="73"/>
    </location>
    <ligand>
        <name>substrate</name>
    </ligand>
</feature>
<feature type="binding site" evidence="1">
    <location>
        <position position="73"/>
    </location>
    <ligand>
        <name>Co(2+)</name>
        <dbReference type="ChEBI" id="CHEBI:48828"/>
    </ligand>
</feature>
<proteinExistence type="inferred from homology"/>
<name>CBIX_SACI7</name>
<accession>C3N773</accession>
<reference key="1">
    <citation type="journal article" date="2009" name="Proc. Natl. Acad. Sci. U.S.A.">
        <title>Biogeography of the Sulfolobus islandicus pan-genome.</title>
        <authorList>
            <person name="Reno M.L."/>
            <person name="Held N.L."/>
            <person name="Fields C.J."/>
            <person name="Burke P.V."/>
            <person name="Whitaker R.J."/>
        </authorList>
    </citation>
    <scope>NUCLEOTIDE SEQUENCE [LARGE SCALE GENOMIC DNA]</scope>
    <source>
        <strain>Y.G.57.14 / Yellowstone #1</strain>
    </source>
</reference>
<evidence type="ECO:0000255" key="1">
    <source>
        <dbReference type="HAMAP-Rule" id="MF_00785"/>
    </source>
</evidence>
<gene>
    <name evidence="1" type="primary">cbiX</name>
    <name type="ordered locus">YG5714_1810</name>
</gene>
<dbReference type="EC" id="4.99.1.3" evidence="1"/>
<dbReference type="EMBL" id="CP001403">
    <property type="protein sequence ID" value="ACP46067.1"/>
    <property type="molecule type" value="Genomic_DNA"/>
</dbReference>
<dbReference type="RefSeq" id="WP_012716363.1">
    <property type="nucleotide sequence ID" value="NC_012622.1"/>
</dbReference>
<dbReference type="SMR" id="C3N773"/>
<dbReference type="GeneID" id="7807210"/>
<dbReference type="KEGG" id="siy:YG5714_1810"/>
<dbReference type="HOGENOM" id="CLU_065901_2_1_2"/>
<dbReference type="UniPathway" id="UPA00148">
    <property type="reaction ID" value="UER00223"/>
</dbReference>
<dbReference type="Proteomes" id="UP000002308">
    <property type="component" value="Chromosome"/>
</dbReference>
<dbReference type="GO" id="GO:0050897">
    <property type="term" value="F:cobalt ion binding"/>
    <property type="evidence" value="ECO:0007669"/>
    <property type="project" value="UniProtKB-UniRule"/>
</dbReference>
<dbReference type="GO" id="GO:0016852">
    <property type="term" value="F:sirohydrochlorin cobaltochelatase activity"/>
    <property type="evidence" value="ECO:0007669"/>
    <property type="project" value="UniProtKB-UniRule"/>
</dbReference>
<dbReference type="GO" id="GO:0019251">
    <property type="term" value="P:anaerobic cobalamin biosynthetic process"/>
    <property type="evidence" value="ECO:0007669"/>
    <property type="project" value="UniProtKB-UniRule"/>
</dbReference>
<dbReference type="CDD" id="cd03416">
    <property type="entry name" value="CbiX_SirB_N"/>
    <property type="match status" value="1"/>
</dbReference>
<dbReference type="Gene3D" id="3.40.50.1400">
    <property type="match status" value="1"/>
</dbReference>
<dbReference type="HAMAP" id="MF_00785">
    <property type="entry name" value="CbiX"/>
    <property type="match status" value="1"/>
</dbReference>
<dbReference type="InterPro" id="IPR002762">
    <property type="entry name" value="CbiX-like"/>
</dbReference>
<dbReference type="InterPro" id="IPR023652">
    <property type="entry name" value="SiroHydchlorin_Cochelatase"/>
</dbReference>
<dbReference type="InterPro" id="IPR050963">
    <property type="entry name" value="Sirohydro_Cobaltochel/CbiX"/>
</dbReference>
<dbReference type="PANTHER" id="PTHR33542">
    <property type="entry name" value="SIROHYDROCHLORIN FERROCHELATASE, CHLOROPLASTIC"/>
    <property type="match status" value="1"/>
</dbReference>
<dbReference type="PANTHER" id="PTHR33542:SF3">
    <property type="entry name" value="SIROHYDROCHLORIN FERROCHELATASE, CHLOROPLASTIC"/>
    <property type="match status" value="1"/>
</dbReference>
<dbReference type="Pfam" id="PF01903">
    <property type="entry name" value="CbiX"/>
    <property type="match status" value="1"/>
</dbReference>
<dbReference type="SUPFAM" id="SSF53800">
    <property type="entry name" value="Chelatase"/>
    <property type="match status" value="1"/>
</dbReference>
<keyword id="KW-0169">Cobalamin biosynthesis</keyword>
<keyword id="KW-0170">Cobalt</keyword>
<keyword id="KW-0456">Lyase</keyword>
<keyword id="KW-0479">Metal-binding</keyword>